<sequence>MAGSEPRGAGSPPPASDWGRLEAAILSGWRTFWYSVAKERATPTASRKEAAEETSALTRLPVDVQLYILSFLSPHDLCQLGSTDHYWNKTIRDPILWRYFLLRDLPSWSSVDWKSLPDLEILKKPISEVTDSTCLDYMEVYKMCCPYTRRALKASRPMYGVVTSFLHSLIIQNEPRFAMFGPGLEELNTSLVLSLMSSEDLCPTAGLPHRQIDGIGSGVNFQLNNQQKFNILILYSTTRKERDRAREEHTSTVNKMFSLQSEGDEQQGSRYSVIPQIQKVCEVVDGFIYVANAEAHRRHEWQDEFSRIMAMTDPAFGSSGRPMLVLSCISQADVKRMPCFYLAHELHLSLLNHPWMVQDTEAETLTGFLNGIEWILEEVESKRAK</sequence>
<proteinExistence type="evidence at protein level"/>
<gene>
    <name evidence="10" type="primary">Fbxo4</name>
    <name evidence="9" type="synonym">Fbx4</name>
</gene>
<keyword id="KW-0963">Cytoplasm</keyword>
<keyword id="KW-0597">Phosphoprotein</keyword>
<keyword id="KW-1185">Reference proteome</keyword>
<keyword id="KW-0833">Ubl conjugation pathway</keyword>
<evidence type="ECO:0000250" key="1">
    <source>
        <dbReference type="UniProtKB" id="Q9UKT5"/>
    </source>
</evidence>
<evidence type="ECO:0000255" key="2">
    <source>
        <dbReference type="PROSITE-ProRule" id="PRU00080"/>
    </source>
</evidence>
<evidence type="ECO:0000269" key="3">
    <source>
    </source>
</evidence>
<evidence type="ECO:0000269" key="4">
    <source>
    </source>
</evidence>
<evidence type="ECO:0000269" key="5">
    <source>
    </source>
</evidence>
<evidence type="ECO:0000269" key="6">
    <source>
    </source>
</evidence>
<evidence type="ECO:0000269" key="7">
    <source>
    </source>
</evidence>
<evidence type="ECO:0000269" key="8">
    <source>
    </source>
</evidence>
<evidence type="ECO:0000303" key="9">
    <source>
    </source>
</evidence>
<evidence type="ECO:0000303" key="10">
    <source>
    </source>
</evidence>
<evidence type="ECO:0000305" key="11"/>
<dbReference type="EMBL" id="AC137902">
    <property type="status" value="NOT_ANNOTATED_CDS"/>
    <property type="molecule type" value="Genomic_DNA"/>
</dbReference>
<dbReference type="EMBL" id="BC040086">
    <property type="protein sequence ID" value="AAH40086.1"/>
    <property type="molecule type" value="mRNA"/>
</dbReference>
<dbReference type="EMBL" id="AJ300659">
    <property type="protein sequence ID" value="CAC36404.1"/>
    <property type="molecule type" value="mRNA"/>
</dbReference>
<dbReference type="CCDS" id="CCDS27359.1"/>
<dbReference type="RefSeq" id="NP_598860.2">
    <property type="nucleotide sequence ID" value="NM_134099.2"/>
</dbReference>
<dbReference type="SMR" id="Q8CHQ0"/>
<dbReference type="BioGRID" id="222983">
    <property type="interactions" value="10"/>
</dbReference>
<dbReference type="FunCoup" id="Q8CHQ0">
    <property type="interactions" value="561"/>
</dbReference>
<dbReference type="IntAct" id="Q8CHQ0">
    <property type="interactions" value="2"/>
</dbReference>
<dbReference type="STRING" id="10090.ENSMUSP00000022791"/>
<dbReference type="GlyGen" id="Q8CHQ0">
    <property type="glycosylation" value="2 sites, 1 O-linked glycan (2 sites)"/>
</dbReference>
<dbReference type="iPTMnet" id="Q8CHQ0"/>
<dbReference type="PhosphoSitePlus" id="Q8CHQ0"/>
<dbReference type="SwissPalm" id="Q8CHQ0"/>
<dbReference type="jPOST" id="Q8CHQ0"/>
<dbReference type="PaxDb" id="10090-ENSMUSP00000022791"/>
<dbReference type="PeptideAtlas" id="Q8CHQ0"/>
<dbReference type="ProteomicsDB" id="271678"/>
<dbReference type="Pumba" id="Q8CHQ0"/>
<dbReference type="Antibodypedia" id="23214">
    <property type="antibodies" value="283 antibodies from 29 providers"/>
</dbReference>
<dbReference type="DNASU" id="106052"/>
<dbReference type="Ensembl" id="ENSMUST00000022791.9">
    <property type="protein sequence ID" value="ENSMUSP00000022791.9"/>
    <property type="gene ID" value="ENSMUSG00000022184.9"/>
</dbReference>
<dbReference type="GeneID" id="106052"/>
<dbReference type="KEGG" id="mmu:106052"/>
<dbReference type="UCSC" id="uc007vcf.2">
    <property type="organism name" value="mouse"/>
</dbReference>
<dbReference type="AGR" id="MGI:2146220"/>
<dbReference type="CTD" id="26272"/>
<dbReference type="MGI" id="MGI:2146220">
    <property type="gene designation" value="Fbxo4"/>
</dbReference>
<dbReference type="VEuPathDB" id="HostDB:ENSMUSG00000022184"/>
<dbReference type="eggNOG" id="ENOG502QUXD">
    <property type="taxonomic scope" value="Eukaryota"/>
</dbReference>
<dbReference type="GeneTree" id="ENSGT00390000014416"/>
<dbReference type="HOGENOM" id="CLU_064324_0_0_1"/>
<dbReference type="InParanoid" id="Q8CHQ0"/>
<dbReference type="OMA" id="HYSVIAQ"/>
<dbReference type="OrthoDB" id="3219396at2759"/>
<dbReference type="PhylomeDB" id="Q8CHQ0"/>
<dbReference type="TreeFam" id="TF331105"/>
<dbReference type="Reactome" id="R-MMU-8951664">
    <property type="pathway name" value="Neddylation"/>
</dbReference>
<dbReference type="Reactome" id="R-MMU-983168">
    <property type="pathway name" value="Antigen processing: Ubiquitination &amp; Proteasome degradation"/>
</dbReference>
<dbReference type="UniPathway" id="UPA00143"/>
<dbReference type="BioGRID-ORCS" id="106052">
    <property type="hits" value="0 hits in 77 CRISPR screens"/>
</dbReference>
<dbReference type="ChiTaRS" id="Fbxo4">
    <property type="organism name" value="mouse"/>
</dbReference>
<dbReference type="PRO" id="PR:Q8CHQ0"/>
<dbReference type="Proteomes" id="UP000000589">
    <property type="component" value="Chromosome 15"/>
</dbReference>
<dbReference type="RNAct" id="Q8CHQ0">
    <property type="molecule type" value="protein"/>
</dbReference>
<dbReference type="Bgee" id="ENSMUSG00000022184">
    <property type="expression patterns" value="Expressed in saccule of membranous labyrinth and 210 other cell types or tissues"/>
</dbReference>
<dbReference type="GO" id="GO:0005737">
    <property type="term" value="C:cytoplasm"/>
    <property type="evidence" value="ECO:0007669"/>
    <property type="project" value="UniProtKB-SubCell"/>
</dbReference>
<dbReference type="GO" id="GO:0019005">
    <property type="term" value="C:SCF ubiquitin ligase complex"/>
    <property type="evidence" value="ECO:0000314"/>
    <property type="project" value="MGI"/>
</dbReference>
<dbReference type="GO" id="GO:0042803">
    <property type="term" value="F:protein homodimerization activity"/>
    <property type="evidence" value="ECO:0007669"/>
    <property type="project" value="Ensembl"/>
</dbReference>
<dbReference type="GO" id="GO:0061630">
    <property type="term" value="F:ubiquitin protein ligase activity"/>
    <property type="evidence" value="ECO:0000314"/>
    <property type="project" value="MGI"/>
</dbReference>
<dbReference type="GO" id="GO:1990756">
    <property type="term" value="F:ubiquitin-like ligase-substrate adaptor activity"/>
    <property type="evidence" value="ECO:0000314"/>
    <property type="project" value="UniProtKB"/>
</dbReference>
<dbReference type="GO" id="GO:0019725">
    <property type="term" value="P:cellular homeostasis"/>
    <property type="evidence" value="ECO:0000315"/>
    <property type="project" value="MGI"/>
</dbReference>
<dbReference type="GO" id="GO:0071479">
    <property type="term" value="P:cellular response to ionizing radiation"/>
    <property type="evidence" value="ECO:0000314"/>
    <property type="project" value="MGI"/>
</dbReference>
<dbReference type="GO" id="GO:0090398">
    <property type="term" value="P:cellular senescence"/>
    <property type="evidence" value="ECO:0000315"/>
    <property type="project" value="MGI"/>
</dbReference>
<dbReference type="GO" id="GO:0035726">
    <property type="term" value="P:common myeloid progenitor cell proliferation"/>
    <property type="evidence" value="ECO:0000315"/>
    <property type="project" value="MGI"/>
</dbReference>
<dbReference type="GO" id="GO:0048147">
    <property type="term" value="P:negative regulation of fibroblast proliferation"/>
    <property type="evidence" value="ECO:0000315"/>
    <property type="project" value="MGI"/>
</dbReference>
<dbReference type="GO" id="GO:1900181">
    <property type="term" value="P:negative regulation of protein localization to nucleus"/>
    <property type="evidence" value="ECO:0000315"/>
    <property type="project" value="MGI"/>
</dbReference>
<dbReference type="GO" id="GO:1902916">
    <property type="term" value="P:positive regulation of protein polyubiquitination"/>
    <property type="evidence" value="ECO:0000315"/>
    <property type="project" value="MGI"/>
</dbReference>
<dbReference type="GO" id="GO:0031398">
    <property type="term" value="P:positive regulation of protein ubiquitination"/>
    <property type="evidence" value="ECO:0000250"/>
    <property type="project" value="UniProtKB"/>
</dbReference>
<dbReference type="GO" id="GO:0032212">
    <property type="term" value="P:positive regulation of telomere maintenance via telomerase"/>
    <property type="evidence" value="ECO:0007669"/>
    <property type="project" value="Ensembl"/>
</dbReference>
<dbReference type="GO" id="GO:0010608">
    <property type="term" value="P:post-transcriptional regulation of gene expression"/>
    <property type="evidence" value="ECO:0000315"/>
    <property type="project" value="MGI"/>
</dbReference>
<dbReference type="GO" id="GO:0031648">
    <property type="term" value="P:protein destabilization"/>
    <property type="evidence" value="ECO:0000315"/>
    <property type="project" value="MGI"/>
</dbReference>
<dbReference type="GO" id="GO:0000209">
    <property type="term" value="P:protein polyubiquitination"/>
    <property type="evidence" value="ECO:0000250"/>
    <property type="project" value="UniProtKB"/>
</dbReference>
<dbReference type="GO" id="GO:2000001">
    <property type="term" value="P:regulation of DNA damage checkpoint"/>
    <property type="evidence" value="ECO:0000315"/>
    <property type="project" value="MGI"/>
</dbReference>
<dbReference type="GO" id="GO:0031146">
    <property type="term" value="P:SCF-dependent proteasomal ubiquitin-dependent protein catabolic process"/>
    <property type="evidence" value="ECO:0000250"/>
    <property type="project" value="UniProtKB"/>
</dbReference>
<dbReference type="GO" id="GO:0000723">
    <property type="term" value="P:telomere maintenance"/>
    <property type="evidence" value="ECO:0000250"/>
    <property type="project" value="UniProtKB"/>
</dbReference>
<dbReference type="GO" id="GO:0006511">
    <property type="term" value="P:ubiquitin-dependent protein catabolic process"/>
    <property type="evidence" value="ECO:0000250"/>
    <property type="project" value="UniProtKB"/>
</dbReference>
<dbReference type="CDD" id="cd22085">
    <property type="entry name" value="F-box_FBXO4"/>
    <property type="match status" value="1"/>
</dbReference>
<dbReference type="CDD" id="cd11656">
    <property type="entry name" value="FBX4_GTPase_like"/>
    <property type="match status" value="1"/>
</dbReference>
<dbReference type="FunFam" id="3.40.50.300:FF:001110">
    <property type="entry name" value="F-box only protein 4"/>
    <property type="match status" value="1"/>
</dbReference>
<dbReference type="Gene3D" id="1.20.1280.50">
    <property type="match status" value="1"/>
</dbReference>
<dbReference type="Gene3D" id="3.40.50.300">
    <property type="entry name" value="P-loop containing nucleotide triphosphate hydrolases"/>
    <property type="match status" value="1"/>
</dbReference>
<dbReference type="InterPro" id="IPR036047">
    <property type="entry name" value="F-box-like_dom_sf"/>
</dbReference>
<dbReference type="InterPro" id="IPR001810">
    <property type="entry name" value="F-box_dom"/>
</dbReference>
<dbReference type="InterPro" id="IPR039588">
    <property type="entry name" value="FBXO4"/>
</dbReference>
<dbReference type="InterPro" id="IPR027417">
    <property type="entry name" value="P-loop_NTPase"/>
</dbReference>
<dbReference type="PANTHER" id="PTHR16008">
    <property type="entry name" value="F-BOX ONLY PROTEIN 4"/>
    <property type="match status" value="1"/>
</dbReference>
<dbReference type="PANTHER" id="PTHR16008:SF4">
    <property type="entry name" value="F-BOX ONLY PROTEIN 4"/>
    <property type="match status" value="1"/>
</dbReference>
<dbReference type="Pfam" id="PF12937">
    <property type="entry name" value="F-box-like"/>
    <property type="match status" value="1"/>
</dbReference>
<dbReference type="SMART" id="SM00256">
    <property type="entry name" value="FBOX"/>
    <property type="match status" value="1"/>
</dbReference>
<dbReference type="SUPFAM" id="SSF81383">
    <property type="entry name" value="F-box domain"/>
    <property type="match status" value="1"/>
</dbReference>
<dbReference type="PROSITE" id="PS50181">
    <property type="entry name" value="FBOX"/>
    <property type="match status" value="1"/>
</dbReference>
<accession>Q8CHQ0</accession>
<accession>E9QPM9</accession>
<accession>Q99JG8</accession>
<feature type="chain" id="PRO_0000119880" description="F-box only protein 4">
    <location>
        <begin position="1"/>
        <end position="385"/>
    </location>
</feature>
<feature type="domain" description="F-box" evidence="2">
    <location>
        <begin position="54"/>
        <end position="100"/>
    </location>
</feature>
<feature type="modified residue" description="Phosphoserine" evidence="4">
    <location>
        <position position="11"/>
    </location>
</feature>
<feature type="modified residue" description="Phosphoserine" evidence="1">
    <location>
        <position position="46"/>
    </location>
</feature>
<feature type="sequence conflict" description="In Ref. 2; AAH40086." evidence="11" ref="2">
    <original>I</original>
    <variation>V</variation>
    <location>
        <position position="91"/>
    </location>
</feature>
<feature type="sequence conflict" description="In Ref. 2; AAH40086." evidence="11" ref="2">
    <original>H</original>
    <variation>R</variation>
    <location>
        <position position="347"/>
    </location>
</feature>
<reference key="1">
    <citation type="journal article" date="2009" name="PLoS Biol.">
        <title>Lineage-specific biology revealed by a finished genome assembly of the mouse.</title>
        <authorList>
            <person name="Church D.M."/>
            <person name="Goodstadt L."/>
            <person name="Hillier L.W."/>
            <person name="Zody M.C."/>
            <person name="Goldstein S."/>
            <person name="She X."/>
            <person name="Bult C.J."/>
            <person name="Agarwala R."/>
            <person name="Cherry J.L."/>
            <person name="DiCuccio M."/>
            <person name="Hlavina W."/>
            <person name="Kapustin Y."/>
            <person name="Meric P."/>
            <person name="Maglott D."/>
            <person name="Birtle Z."/>
            <person name="Marques A.C."/>
            <person name="Graves T."/>
            <person name="Zhou S."/>
            <person name="Teague B."/>
            <person name="Potamousis K."/>
            <person name="Churas C."/>
            <person name="Place M."/>
            <person name="Herschleb J."/>
            <person name="Runnheim R."/>
            <person name="Forrest D."/>
            <person name="Amos-Landgraf J."/>
            <person name="Schwartz D.C."/>
            <person name="Cheng Z."/>
            <person name="Lindblad-Toh K."/>
            <person name="Eichler E.E."/>
            <person name="Ponting C.P."/>
        </authorList>
    </citation>
    <scope>NUCLEOTIDE SEQUENCE [LARGE SCALE GENOMIC DNA]</scope>
    <source>
        <strain>C57BL/6J</strain>
    </source>
</reference>
<reference key="2">
    <citation type="journal article" date="2004" name="Genome Res.">
        <title>The status, quality, and expansion of the NIH full-length cDNA project: the Mammalian Gene Collection (MGC).</title>
        <authorList>
            <consortium name="The MGC Project Team"/>
        </authorList>
    </citation>
    <scope>NUCLEOTIDE SEQUENCE [LARGE SCALE MRNA]</scope>
    <source>
        <strain>Czech II</strain>
        <tissue>Mammary tumor</tissue>
    </source>
</reference>
<reference key="3">
    <citation type="submission" date="2000-12" db="EMBL/GenBank/DDBJ databases">
        <title>Osteoblasts express the mouse F-box protein mFbx4.</title>
        <authorList>
            <person name="Kopecky B.S."/>
            <person name="Varga F."/>
            <person name="Klaushofer K."/>
        </authorList>
    </citation>
    <scope>NUCLEOTIDE SEQUENCE [MRNA] OF 245-385</scope>
    <source>
        <tissue>Osteoblast</tissue>
    </source>
</reference>
<reference key="4">
    <citation type="journal article" date="2006" name="Mol. Cell">
        <title>Phosphorylation-dependent ubiquitination of cyclin D1 by the SCF(FBX4-alphaB crystallin) complex.</title>
        <authorList>
            <person name="Lin D.I."/>
            <person name="Barbash O."/>
            <person name="Kumar K.G."/>
            <person name="Weber J.D."/>
            <person name="Harper J.W."/>
            <person name="Klein-Szanto A.J."/>
            <person name="Rustgi A."/>
            <person name="Fuchs S.Y."/>
            <person name="Diehl J.A."/>
        </authorList>
    </citation>
    <scope>FUNCTION</scope>
    <scope>PATHWAY</scope>
    <scope>IDENTIFICATION IN A SCF UBIQUITIN-PROTEIN LIGASE COMPLEX</scope>
    <scope>SUBUNIT</scope>
    <scope>SUBCELLULAR LOCATION</scope>
</reference>
<reference key="5">
    <citation type="journal article" date="2012" name="Mol. Cell. Biol.">
        <title>Genetic reevaluation of the role of F-box proteins in cyclin D1 degradation.</title>
        <authorList>
            <person name="Kanie T."/>
            <person name="Onoyama I."/>
            <person name="Matsumoto A."/>
            <person name="Yamada M."/>
            <person name="Nakatsumi H."/>
            <person name="Tateishi Y."/>
            <person name="Yamamura S."/>
            <person name="Tsunematsu R."/>
            <person name="Matsumoto M."/>
            <person name="Nakayama K.I."/>
        </authorList>
    </citation>
    <scope>FUNCTION</scope>
    <scope>DISRUPTION PHENOTYPE</scope>
</reference>
<reference key="6">
    <citation type="journal article" date="2008" name="Cancer Cell">
        <title>Mutations in Fbx4 inhibit dimerization of the SCF(Fbx4) ligase and contribute to cyclin D1 overexpression in human cancer.</title>
        <authorList>
            <person name="Barbash O."/>
            <person name="Zamfirova P."/>
            <person name="Lin D.I."/>
            <person name="Chen X."/>
            <person name="Yang K."/>
            <person name="Nakagawa H."/>
            <person name="Lu F."/>
            <person name="Rustgi A.K."/>
            <person name="Diehl J.A."/>
        </authorList>
    </citation>
    <scope>FUNCTION</scope>
    <scope>PATHWAY</scope>
    <scope>PHOSPHORYLATION AT SER-11</scope>
</reference>
<reference key="7">
    <citation type="journal article" date="2009" name="J. Cell Biol.">
        <title>GNL3L stabilizes the TRF1 complex and promotes mitotic transition.</title>
        <authorList>
            <person name="Zhu Q."/>
            <person name="Meng L."/>
            <person name="Hsu J.K."/>
            <person name="Lin T."/>
            <person name="Teishima J."/>
            <person name="Tsai R.Y."/>
        </authorList>
    </citation>
    <scope>INTERACTION WITH TERF1</scope>
</reference>
<reference key="8">
    <citation type="journal article" date="2009" name="Oncogene">
        <title>Lysine 269 is essential for cyclin D1 ubiquitylation by the SCF(Fbx4/alphaB-crystallin) ligase and subsequent proteasome-dependent degradation.</title>
        <authorList>
            <person name="Barbash O."/>
            <person name="Egan E."/>
            <person name="Pontano L.L."/>
            <person name="Kosak J."/>
            <person name="Diehl J.A."/>
        </authorList>
    </citation>
    <scope>FUNCTION</scope>
    <scope>PATHWAY</scope>
</reference>
<reference key="9">
    <citation type="journal article" date="2010" name="Cell">
        <title>A tissue-specific atlas of mouse protein phosphorylation and expression.</title>
        <authorList>
            <person name="Huttlin E.L."/>
            <person name="Jedrychowski M.P."/>
            <person name="Elias J.E."/>
            <person name="Goswami T."/>
            <person name="Rad R."/>
            <person name="Beausoleil S.A."/>
            <person name="Villen J."/>
            <person name="Haas W."/>
            <person name="Sowa M.E."/>
            <person name="Gygi S.P."/>
        </authorList>
    </citation>
    <scope>IDENTIFICATION BY MASS SPECTROMETRY [LARGE SCALE ANALYSIS]</scope>
    <source>
        <tissue>Spleen</tissue>
    </source>
</reference>
<reference key="10">
    <citation type="journal article" date="2017" name="Nat. Commun.">
        <title>Fbxo4-mediated degradation of Fxr1 suppresses tumorigenesis in head and neck squamous cell carcinoma.</title>
        <authorList>
            <person name="Qie S."/>
            <person name="Majumder M."/>
            <person name="Mackiewicz K."/>
            <person name="Howley B.V."/>
            <person name="Peterson Y.K."/>
            <person name="Howe P.H."/>
            <person name="Palanisamy V."/>
            <person name="Diehl J.A."/>
        </authorList>
    </citation>
    <scope>FUNCTION</scope>
    <scope>PATHWAY</scope>
</reference>
<protein>
    <recommendedName>
        <fullName evidence="11">F-box only protein 4</fullName>
    </recommendedName>
</protein>
<organism>
    <name type="scientific">Mus musculus</name>
    <name type="common">Mouse</name>
    <dbReference type="NCBI Taxonomy" id="10090"/>
    <lineage>
        <taxon>Eukaryota</taxon>
        <taxon>Metazoa</taxon>
        <taxon>Chordata</taxon>
        <taxon>Craniata</taxon>
        <taxon>Vertebrata</taxon>
        <taxon>Euteleostomi</taxon>
        <taxon>Mammalia</taxon>
        <taxon>Eutheria</taxon>
        <taxon>Euarchontoglires</taxon>
        <taxon>Glires</taxon>
        <taxon>Rodentia</taxon>
        <taxon>Myomorpha</taxon>
        <taxon>Muroidea</taxon>
        <taxon>Muridae</taxon>
        <taxon>Murinae</taxon>
        <taxon>Mus</taxon>
        <taxon>Mus</taxon>
    </lineage>
</organism>
<comment type="function">
    <text evidence="1 3 4 6 8">Substrate recognition component of a SCF (SKP1-CUL1-F-box protein) E3 ubiquitin-protein ligase complex that mediates the ubiquitination and subsequent proteasomal degradation of target proteins (PubMed:17081987, PubMed:18598945, PubMed:19767775, PubMed:29142209). Promotes ubiquitination of cyclin-D1 (CCND1) and its subsequent proteasomal degradation (PubMed:17081987, PubMed:18598945, PubMed:19767775). However, it does not act as a major regulator of CCND1 stability during the G1/S transition (PubMed:22124152). Recognizes TERF1 and promotes its ubiquitination together with UBE2D1 (By similarity). Promotes ubiquitination of FXR1 following phosphorylation of FXR1 by GSK3B, leading to FXR1 degradation by the proteasome (PubMed:29142209).</text>
</comment>
<comment type="pathway">
    <text evidence="3 4 6 8">Protein modification; protein ubiquitination.</text>
</comment>
<comment type="subunit">
    <text evidence="1 3 5">Homodimer (By similarity). Part of the SCF (SKP1-CUL1-F-box) E3 ubiquitin-protein ligase complex SCF(FBXO4) formed of CUL1, SKP1, RBX1 and FBXO4 (PubMed:17081987). Interacts with TERF1; this interaction is prevented in the presence of GNL3L (PubMed:19487455). Identified in a complex with CRYAB and CCND1 (PubMed:17081987).</text>
</comment>
<comment type="interaction">
    <interactant intactId="EBI-3895153">
        <id>Q8CHQ0</id>
    </interactant>
    <interactant intactId="EBI-356480">
        <id>P62259</id>
        <label>Ywhae</label>
    </interactant>
    <organismsDiffer>false</organismsDiffer>
    <experiments>2</experiments>
</comment>
<comment type="subcellular location">
    <subcellularLocation>
        <location evidence="3">Cytoplasm</location>
    </subcellularLocation>
</comment>
<comment type="PTM">
    <text evidence="4">Phosphorylation at Ser-11 varies during the cell cycle. It is low in resting cells and high in the S phase and the G2/M phase of the cell cycle. Phosphorylation is decreased during late G1 phase. Phosphorylation at Ser-11 is important for homodimerization and for optimal ubiquitin ligase activity towards CCND1.</text>
</comment>
<comment type="disruption phenotype">
    <text evidence="7">No visible phenotype; mice were born at the expected Mendelian ratio and were healthy (PubMed:22124152). The half-life of cyclin-D1 (CCND1) is not affected (PubMed:22124152).</text>
</comment>
<name>FBX4_MOUSE</name>